<keyword id="KW-0002">3D-structure</keyword>
<keyword id="KW-0903">Direct protein sequencing</keyword>
<keyword id="KW-0479">Metal-binding</keyword>
<keyword id="KW-0500">Molybdenum</keyword>
<keyword id="KW-0560">Oxidoreductase</keyword>
<dbReference type="EC" id="1.97.1.2"/>
<dbReference type="EMBL" id="AJ243850">
    <property type="protein sequence ID" value="CAB50913.1"/>
    <property type="molecule type" value="Genomic_DNA"/>
</dbReference>
<dbReference type="PIR" id="S65430">
    <property type="entry name" value="S65430"/>
</dbReference>
<dbReference type="PDB" id="4V4C">
    <property type="method" value="X-ray"/>
    <property type="resolution" value="2.35 A"/>
    <property type="chains" value="A/C/E/G/I/K/M/O/Q/S/U/W=1-875"/>
</dbReference>
<dbReference type="PDB" id="4V4D">
    <property type="method" value="X-ray"/>
    <property type="resolution" value="2.20 A"/>
    <property type="chains" value="A/C/E/G/I/K/M/O/Q/S/U/W=1-875"/>
</dbReference>
<dbReference type="PDB" id="4V4E">
    <property type="method" value="X-ray"/>
    <property type="resolution" value="2.00 A"/>
    <property type="chains" value="A/C/E/G/I/K/M/O/Q/S/U/W=1-875"/>
</dbReference>
<dbReference type="PDBsum" id="4V4C"/>
<dbReference type="PDBsum" id="4V4D"/>
<dbReference type="PDBsum" id="4V4E"/>
<dbReference type="SMR" id="P80563"/>
<dbReference type="TCDB" id="5.A.3.7.1">
    <property type="family name" value="the prokaryotic molybdopterin-containing oxidoreductase (pmo) family"/>
</dbReference>
<dbReference type="BRENDA" id="1.97.1.2">
    <property type="organism ID" value="4585"/>
</dbReference>
<dbReference type="GO" id="GO:0030288">
    <property type="term" value="C:outer membrane-bounded periplasmic space"/>
    <property type="evidence" value="ECO:0007669"/>
    <property type="project" value="TreeGrafter"/>
</dbReference>
<dbReference type="GO" id="GO:0009055">
    <property type="term" value="F:electron transfer activity"/>
    <property type="evidence" value="ECO:0007669"/>
    <property type="project" value="TreeGrafter"/>
</dbReference>
<dbReference type="GO" id="GO:0030151">
    <property type="term" value="F:molybdenum ion binding"/>
    <property type="evidence" value="ECO:0007669"/>
    <property type="project" value="TreeGrafter"/>
</dbReference>
<dbReference type="GO" id="GO:0043546">
    <property type="term" value="F:molybdopterin cofactor binding"/>
    <property type="evidence" value="ECO:0007669"/>
    <property type="project" value="InterPro"/>
</dbReference>
<dbReference type="GO" id="GO:0018706">
    <property type="term" value="F:pyrogallol hydroxytransferase activity"/>
    <property type="evidence" value="ECO:0007669"/>
    <property type="project" value="UniProtKB-EC"/>
</dbReference>
<dbReference type="GO" id="GO:0009061">
    <property type="term" value="P:anaerobic respiration"/>
    <property type="evidence" value="ECO:0007669"/>
    <property type="project" value="TreeGrafter"/>
</dbReference>
<dbReference type="CDD" id="cd02777">
    <property type="entry name" value="MopB_CT_DMSOR-like"/>
    <property type="match status" value="1"/>
</dbReference>
<dbReference type="CDD" id="cd02751">
    <property type="entry name" value="MopB_DMSOR-like"/>
    <property type="match status" value="1"/>
</dbReference>
<dbReference type="Gene3D" id="2.20.25.340">
    <property type="match status" value="1"/>
</dbReference>
<dbReference type="Gene3D" id="2.40.40.20">
    <property type="match status" value="1"/>
</dbReference>
<dbReference type="Gene3D" id="3.40.50.740">
    <property type="match status" value="2"/>
</dbReference>
<dbReference type="InterPro" id="IPR049032">
    <property type="entry name" value="AhtL-like_N"/>
</dbReference>
<dbReference type="InterPro" id="IPR009010">
    <property type="entry name" value="Asp_de-COase-like_dom_sf"/>
</dbReference>
<dbReference type="InterPro" id="IPR006657">
    <property type="entry name" value="MoPterin_dinucl-bd_dom"/>
</dbReference>
<dbReference type="InterPro" id="IPR006656">
    <property type="entry name" value="Mopterin_OxRdtase"/>
</dbReference>
<dbReference type="InterPro" id="IPR050612">
    <property type="entry name" value="Prok_Mopterin_Oxidored"/>
</dbReference>
<dbReference type="PANTHER" id="PTHR43742">
    <property type="entry name" value="TRIMETHYLAMINE-N-OXIDE REDUCTASE"/>
    <property type="match status" value="1"/>
</dbReference>
<dbReference type="PANTHER" id="PTHR43742:SF10">
    <property type="entry name" value="TRIMETHYLAMINE-N-OXIDE REDUCTASE 2"/>
    <property type="match status" value="1"/>
</dbReference>
<dbReference type="Pfam" id="PF21423">
    <property type="entry name" value="AhtL-like_1st"/>
    <property type="match status" value="1"/>
</dbReference>
<dbReference type="Pfam" id="PF00384">
    <property type="entry name" value="Molybdopterin"/>
    <property type="match status" value="1"/>
</dbReference>
<dbReference type="Pfam" id="PF01568">
    <property type="entry name" value="Molydop_binding"/>
    <property type="match status" value="1"/>
</dbReference>
<dbReference type="SUPFAM" id="SSF50692">
    <property type="entry name" value="ADC-like"/>
    <property type="match status" value="1"/>
</dbReference>
<dbReference type="SUPFAM" id="SSF53706">
    <property type="entry name" value="Formate dehydrogenase/DMSO reductase, domains 1-3"/>
    <property type="match status" value="1"/>
</dbReference>
<protein>
    <recommendedName>
        <fullName>Pyrogallol hydroxytransferase large subunit</fullName>
        <ecNumber>1.97.1.2</ecNumber>
    </recommendedName>
    <alternativeName>
        <fullName>Transhydroxylase subunit alpha</fullName>
    </alternativeName>
</protein>
<feature type="initiator methionine" description="Removed" evidence="3">
    <location>
        <position position="1"/>
    </location>
</feature>
<feature type="chain" id="PRO_0000063242" description="Pyrogallol hydroxytransferase large subunit">
    <location>
        <begin position="2"/>
        <end position="875"/>
    </location>
</feature>
<feature type="region of interest" description="Disordered" evidence="1">
    <location>
        <begin position="82"/>
        <end position="104"/>
    </location>
</feature>
<feature type="binding site">
    <location>
        <position position="175"/>
    </location>
    <ligand>
        <name>Mo-bis(molybdopterin guanine dinucleotide)</name>
        <dbReference type="ChEBI" id="CHEBI:60539"/>
    </ligand>
    <ligandPart>
        <name>Mo</name>
        <dbReference type="ChEBI" id="CHEBI:28685"/>
    </ligandPart>
</feature>
<feature type="strand" evidence="7">
    <location>
        <begin position="5"/>
        <end position="9"/>
    </location>
</feature>
<feature type="strand" evidence="7">
    <location>
        <begin position="16"/>
        <end position="21"/>
    </location>
</feature>
<feature type="strand" evidence="7">
    <location>
        <begin position="24"/>
        <end position="29"/>
    </location>
</feature>
<feature type="turn" evidence="7">
    <location>
        <begin position="35"/>
        <end position="37"/>
    </location>
</feature>
<feature type="strand" evidence="7">
    <location>
        <begin position="44"/>
        <end position="46"/>
    </location>
</feature>
<feature type="strand" evidence="7">
    <location>
        <begin position="49"/>
        <end position="51"/>
    </location>
</feature>
<feature type="helix" evidence="7">
    <location>
        <begin position="61"/>
        <end position="64"/>
    </location>
</feature>
<feature type="helix" evidence="7">
    <location>
        <begin position="67"/>
        <end position="70"/>
    </location>
</feature>
<feature type="strand" evidence="5">
    <location>
        <begin position="73"/>
        <end position="75"/>
    </location>
</feature>
<feature type="strand" evidence="7">
    <location>
        <begin position="80"/>
        <end position="82"/>
    </location>
</feature>
<feature type="helix" evidence="7">
    <location>
        <begin position="93"/>
        <end position="95"/>
    </location>
</feature>
<feature type="helix" evidence="7">
    <location>
        <begin position="98"/>
        <end position="101"/>
    </location>
</feature>
<feature type="helix" evidence="7">
    <location>
        <begin position="105"/>
        <end position="108"/>
    </location>
</feature>
<feature type="strand" evidence="7">
    <location>
        <begin position="109"/>
        <end position="111"/>
    </location>
</feature>
<feature type="helix" evidence="7">
    <location>
        <begin position="114"/>
        <end position="131"/>
    </location>
</feature>
<feature type="helix" evidence="7">
    <location>
        <begin position="134"/>
        <end position="136"/>
    </location>
</feature>
<feature type="strand" evidence="7">
    <location>
        <begin position="137"/>
        <end position="140"/>
    </location>
</feature>
<feature type="turn" evidence="7">
    <location>
        <begin position="149"/>
        <end position="151"/>
    </location>
</feature>
<feature type="turn" evidence="7">
    <location>
        <begin position="153"/>
        <end position="155"/>
    </location>
</feature>
<feature type="helix" evidence="7">
    <location>
        <begin position="156"/>
        <end position="164"/>
    </location>
</feature>
<feature type="strand" evidence="7">
    <location>
        <begin position="167"/>
        <end position="170"/>
    </location>
</feature>
<feature type="turn" evidence="7">
    <location>
        <begin position="174"/>
        <end position="176"/>
    </location>
</feature>
<feature type="helix" evidence="7">
    <location>
        <begin position="177"/>
        <end position="181"/>
    </location>
</feature>
<feature type="helix" evidence="7">
    <location>
        <begin position="183"/>
        <end position="187"/>
    </location>
</feature>
<feature type="helix" evidence="7">
    <location>
        <begin position="190"/>
        <end position="192"/>
    </location>
</feature>
<feature type="helix" evidence="7">
    <location>
        <begin position="201"/>
        <end position="208"/>
    </location>
</feature>
<feature type="strand" evidence="7">
    <location>
        <begin position="210"/>
        <end position="216"/>
    </location>
</feature>
<feature type="helix" evidence="7">
    <location>
        <begin position="219"/>
        <end position="222"/>
    </location>
</feature>
<feature type="strand" evidence="7">
    <location>
        <begin position="224"/>
        <end position="226"/>
    </location>
</feature>
<feature type="turn" evidence="7">
    <location>
        <begin position="228"/>
        <end position="231"/>
    </location>
</feature>
<feature type="helix" evidence="7">
    <location>
        <begin position="232"/>
        <end position="240"/>
    </location>
</feature>
<feature type="strand" evidence="7">
    <location>
        <begin position="244"/>
        <end position="248"/>
    </location>
</feature>
<feature type="helix" evidence="7">
    <location>
        <begin position="254"/>
        <end position="259"/>
    </location>
</feature>
<feature type="strand" evidence="7">
    <location>
        <begin position="261"/>
        <end position="264"/>
    </location>
</feature>
<feature type="helix" evidence="7">
    <location>
        <begin position="271"/>
        <end position="284"/>
    </location>
</feature>
<feature type="helix" evidence="7">
    <location>
        <begin position="290"/>
        <end position="296"/>
    </location>
</feature>
<feature type="strand" evidence="7">
    <location>
        <begin position="297"/>
        <end position="299"/>
    </location>
</feature>
<feature type="helix" evidence="7">
    <location>
        <begin position="300"/>
        <end position="307"/>
    </location>
</feature>
<feature type="turn" evidence="7">
    <location>
        <begin position="308"/>
        <end position="312"/>
    </location>
</feature>
<feature type="helix" evidence="7">
    <location>
        <begin position="318"/>
        <end position="325"/>
    </location>
</feature>
<feature type="helix" evidence="7">
    <location>
        <begin position="329"/>
        <end position="341"/>
    </location>
</feature>
<feature type="strand" evidence="7">
    <location>
        <begin position="344"/>
        <end position="348"/>
    </location>
</feature>
<feature type="turn" evidence="7">
    <location>
        <begin position="349"/>
        <end position="352"/>
    </location>
</feature>
<feature type="helix" evidence="7">
    <location>
        <begin position="356"/>
        <end position="358"/>
    </location>
</feature>
<feature type="helix" evidence="7">
    <location>
        <begin position="363"/>
        <end position="376"/>
    </location>
</feature>
<feature type="turn" evidence="7">
    <location>
        <begin position="377"/>
        <end position="380"/>
    </location>
</feature>
<feature type="strand" evidence="7">
    <location>
        <begin position="389"/>
        <end position="391"/>
    </location>
</feature>
<feature type="helix" evidence="7">
    <location>
        <begin position="404"/>
        <end position="406"/>
    </location>
</feature>
<feature type="turn" evidence="5">
    <location>
        <begin position="408"/>
        <end position="410"/>
    </location>
</feature>
<feature type="turn" evidence="7">
    <location>
        <begin position="413"/>
        <end position="415"/>
    </location>
</feature>
<feature type="helix" evidence="7">
    <location>
        <begin position="417"/>
        <end position="419"/>
    </location>
</feature>
<feature type="helix" evidence="7">
    <location>
        <begin position="422"/>
        <end position="426"/>
    </location>
</feature>
<feature type="strand" evidence="7">
    <location>
        <begin position="429"/>
        <end position="431"/>
    </location>
</feature>
<feature type="strand" evidence="7">
    <location>
        <begin position="438"/>
        <end position="441"/>
    </location>
</feature>
<feature type="strand" evidence="7">
    <location>
        <begin position="446"/>
        <end position="448"/>
    </location>
</feature>
<feature type="helix" evidence="7">
    <location>
        <begin position="449"/>
        <end position="451"/>
    </location>
</feature>
<feature type="helix" evidence="7">
    <location>
        <begin position="452"/>
        <end position="458"/>
    </location>
</feature>
<feature type="strand" evidence="7">
    <location>
        <begin position="461"/>
        <end position="464"/>
    </location>
</feature>
<feature type="helix" evidence="7">
    <location>
        <begin position="475"/>
        <end position="477"/>
    </location>
</feature>
<feature type="strand" evidence="7">
    <location>
        <begin position="479"/>
        <end position="483"/>
    </location>
</feature>
<feature type="strand" evidence="7">
    <location>
        <begin position="492"/>
        <end position="497"/>
    </location>
</feature>
<feature type="helix" evidence="7">
    <location>
        <begin position="500"/>
        <end position="503"/>
    </location>
</feature>
<feature type="strand" evidence="7">
    <location>
        <begin position="504"/>
        <end position="506"/>
    </location>
</feature>
<feature type="helix" evidence="7">
    <location>
        <begin position="508"/>
        <end position="513"/>
    </location>
</feature>
<feature type="strand" evidence="7">
    <location>
        <begin position="521"/>
        <end position="529"/>
    </location>
</feature>
<feature type="helix" evidence="7">
    <location>
        <begin position="533"/>
        <end position="535"/>
    </location>
</feature>
<feature type="strand" evidence="7">
    <location>
        <begin position="537"/>
        <end position="542"/>
    </location>
</feature>
<feature type="helix" evidence="7">
    <location>
        <begin position="545"/>
        <end position="547"/>
    </location>
</feature>
<feature type="strand" evidence="7">
    <location>
        <begin position="550"/>
        <end position="553"/>
    </location>
</feature>
<feature type="helix" evidence="7">
    <location>
        <begin position="564"/>
        <end position="567"/>
    </location>
</feature>
<feature type="strand" evidence="7">
    <location>
        <begin position="568"/>
        <end position="570"/>
    </location>
</feature>
<feature type="strand" evidence="7">
    <location>
        <begin position="572"/>
        <end position="576"/>
    </location>
</feature>
<feature type="helix" evidence="7">
    <location>
        <begin position="589"/>
        <end position="599"/>
    </location>
</feature>
<feature type="helix" evidence="7">
    <location>
        <begin position="603"/>
        <end position="607"/>
    </location>
</feature>
<feature type="helix" evidence="7">
    <location>
        <begin position="612"/>
        <end position="621"/>
    </location>
</feature>
<feature type="helix" evidence="7">
    <location>
        <begin position="625"/>
        <end position="627"/>
    </location>
</feature>
<feature type="helix" evidence="7">
    <location>
        <begin position="631"/>
        <end position="637"/>
    </location>
</feature>
<feature type="strand" evidence="7">
    <location>
        <begin position="639"/>
        <end position="641"/>
    </location>
</feature>
<feature type="strand" evidence="6">
    <location>
        <begin position="646"/>
        <end position="648"/>
    </location>
</feature>
<feature type="helix" evidence="7">
    <location>
        <begin position="655"/>
        <end position="658"/>
    </location>
</feature>
<feature type="helix" evidence="7">
    <location>
        <begin position="672"/>
        <end position="674"/>
    </location>
</feature>
<feature type="strand" evidence="7">
    <location>
        <begin position="686"/>
        <end position="691"/>
    </location>
</feature>
<feature type="helix" evidence="7">
    <location>
        <begin position="693"/>
        <end position="700"/>
    </location>
</feature>
<feature type="turn" evidence="7">
    <location>
        <begin position="721"/>
        <end position="723"/>
    </location>
</feature>
<feature type="helix" evidence="7">
    <location>
        <begin position="725"/>
        <end position="728"/>
    </location>
</feature>
<feature type="strand" evidence="7">
    <location>
        <begin position="732"/>
        <end position="735"/>
    </location>
</feature>
<feature type="strand" evidence="7">
    <location>
        <begin position="746"/>
        <end position="749"/>
    </location>
</feature>
<feature type="helix" evidence="7">
    <location>
        <begin position="753"/>
        <end position="756"/>
    </location>
</feature>
<feature type="turn" evidence="7">
    <location>
        <begin position="758"/>
        <end position="760"/>
    </location>
</feature>
<feature type="strand" evidence="7">
    <location>
        <begin position="761"/>
        <end position="764"/>
    </location>
</feature>
<feature type="strand" evidence="7">
    <location>
        <begin position="767"/>
        <end position="775"/>
    </location>
</feature>
<feature type="helix" evidence="7">
    <location>
        <begin position="776"/>
        <end position="781"/>
    </location>
</feature>
<feature type="strand" evidence="7">
    <location>
        <begin position="789"/>
        <end position="794"/>
    </location>
</feature>
<feature type="strand" evidence="7">
    <location>
        <begin position="797"/>
        <end position="809"/>
    </location>
</feature>
<feature type="strand" evidence="7">
    <location>
        <begin position="813"/>
        <end position="815"/>
    </location>
</feature>
<feature type="strand" evidence="7">
    <location>
        <begin position="825"/>
        <end position="828"/>
    </location>
</feature>
<feature type="turn" evidence="7">
    <location>
        <begin position="829"/>
        <end position="831"/>
    </location>
</feature>
<feature type="strand" evidence="7">
    <location>
        <begin position="834"/>
        <end position="836"/>
    </location>
</feature>
<feature type="helix" evidence="7">
    <location>
        <begin position="839"/>
        <end position="841"/>
    </location>
</feature>
<feature type="strand" evidence="7">
    <location>
        <begin position="848"/>
        <end position="851"/>
    </location>
</feature>
<feature type="strand" evidence="7">
    <location>
        <begin position="860"/>
        <end position="866"/>
    </location>
</feature>
<sequence>MGEVVRLTNSSTGGPVFVYVKDGKIIRMTPMDFDDAVDAPSWKIEARGKTFTPPRKTSIAPYTAGFKSMIYSDLRIPYPMKRKSFDPNGERNPQLRGAGLSKQDPWSDYERISWDEATDIVVAEINRIKHAYGPSAILSTPSSHHMWGNVGYRHSTYFRFMNMMGFTYADHNPDSWEGWHWGGMHMWGFSWRLGNPEQYDLLEDGLKHAEMIVFWSSDPETNSGIYAGFESNIRRQWLKDLGVDFVFIDPHMNHTARLVADKWFSPKIGTDHALSFAIAYTWLKEDSYDKEYVAANAHGFEEWADYVLGKTDGTPKTCEWAEEESGVPACEIRALARQWAKKNTYLAAGGLGGWGGACRASHGIEWARGMIALATMQGMGKPGSNMWSTTQGVPLDYEFYFPGYAEGGISGDCENSAAGFKFAWRMFDGKTTFPSPSNLNTSAGQHIPRLKIPECIMGGKFQWSGKGFAGGDISHQLHQYEYPAPGYSKIKMFWKYGGPHLGTMTATNRYAKMYTHDSLEFVVSQSIWFEGEVPFADIILPACTNFERWDISEFANCSGYIPDNYQLCNHRVISLQAKCIEPVGESMSDYEIYRLFAKKLNIEEMFSEGKDELAWCEQYFNATDMPKYMTWDEFFKKGYFVVPDNPNRKKTVALRWFAEGREKDTPDWGPRLNNQVCRKGLQTTTGKVEFIATSLKNFEEQGYIDEHRPSMHTYVPAWESQKHSPLAVKYPLGMLSPHPRFSMHTMGDGKNSYMNYIKDHRVEVDGYKYWIMRVNSIDAEARGIKNGDLIRAYNDRGSVILAAQVTECLQPGTVHSYESCAVYDPLGTAGKSADRGGCINILTPDRYISKYACGMANNTALVEIEKWDGDKYEIY</sequence>
<organism>
    <name type="scientific">Pelobacter acidigallici</name>
    <dbReference type="NCBI Taxonomy" id="35816"/>
    <lineage>
        <taxon>Bacteria</taxon>
        <taxon>Pseudomonadati</taxon>
        <taxon>Thermodesulfobacteriota</taxon>
        <taxon>Desulfuromonadia</taxon>
        <taxon>Desulfuromonadales</taxon>
        <taxon>Desulfuromonadaceae</taxon>
        <taxon>Pelobacter</taxon>
    </lineage>
</organism>
<comment type="function">
    <text>Isomerization of pyrogallol to phloroglucin.</text>
</comment>
<comment type="catalytic activity">
    <reaction>
        <text>1,2,3,5-tetrahydroxybenzene + 1,2,3-trihydroxybenzene = 1,2,3,5-tetrahydroxybenzene + 1,3,5-trihydroxybenzene</text>
        <dbReference type="Rhea" id="RHEA:21000"/>
        <dbReference type="ChEBI" id="CHEBI:16164"/>
        <dbReference type="ChEBI" id="CHEBI:16204"/>
        <dbReference type="ChEBI" id="CHEBI:16746"/>
        <dbReference type="EC" id="1.97.1.2"/>
    </reaction>
</comment>
<comment type="cofactor">
    <cofactor evidence="2">
        <name>Mo-bis(molybdopterin guanine dinucleotide)</name>
        <dbReference type="ChEBI" id="CHEBI:60539"/>
    </cofactor>
    <text evidence="2">Binds 1 molybdenum-bis(molybdopterin guanine dinucleotide) (Mo-bis-MGD) cofactor per subunit.</text>
</comment>
<comment type="subunit">
    <text evidence="2">Heterodimer of a large and a small subunit.</text>
</comment>
<comment type="similarity">
    <text evidence="4">Belongs to the prokaryotic molybdopterin-containing oxidoreductase family.</text>
</comment>
<proteinExistence type="evidence at protein level"/>
<name>PGTL_PELAC</name>
<accession>P80563</accession>
<accession>Q9S354</accession>
<reference key="1">
    <citation type="submission" date="1999-07" db="EMBL/GenBank/DDBJ databases">
        <authorList>
            <person name="Retey J."/>
        </authorList>
    </citation>
    <scope>NUCLEOTIDE SEQUENCE [GENOMIC DNA]</scope>
</reference>
<reference key="2">
    <citation type="journal article" date="1996" name="Eur. J. Biochem.">
        <title>One molecule of molybdopterin guanine dinucleotide is associated with each subunit of the heterodimeric Mo-Fe-S protein transhydroxylase of Pelobacter acidigallici as determined by SDS/PAGE and mass spectrometry.</title>
        <authorList>
            <person name="Reichenbecher W."/>
            <person name="Ruediger A."/>
            <person name="Kroneck P.M.H."/>
            <person name="Schink B."/>
        </authorList>
    </citation>
    <scope>PROTEIN SEQUENCE OF 2-17</scope>
    <source>
        <strain>ATCC 49970 / DSM 2377 / Ma Gal2 / Braunschweig</strain>
    </source>
</reference>
<reference key="3">
    <citation type="journal article" date="1999" name="Biochim. Biophys. Acta">
        <title>Towards the reaction mechanism of pyrogallol-phloroglucinol transhydroxylase of Pelobacter acidigallici.</title>
        <authorList>
            <person name="Reichenbecher W."/>
            <person name="Schink B."/>
        </authorList>
    </citation>
    <scope>CHARACTERIZATION</scope>
</reference>
<reference key="4">
    <citation type="journal article" date="2004" name="Proc. Natl. Acad. Sci. U.S.A.">
        <title>Crystal structure of pyrogallol-phloroglucinol transhydroxylase, an Mo enzyme capable of intermolecular hydroxyl transfer between phenols.</title>
        <authorList>
            <person name="Messerschmidt A."/>
            <person name="Niessen H."/>
            <person name="Abt D."/>
            <person name="Einsle O."/>
            <person name="Schink B."/>
            <person name="Kroneck P.M."/>
        </authorList>
    </citation>
    <scope>X-RAY CRYSTALLOGRAPHY (2.0 ANGSTROMS) OF 2-874 IN COMPLEXES WITH MO-BIS-MGD; SUBSTRATE OR INHIBITOR AND THE SMALL SUBUNIT</scope>
    <scope>COFACTOR</scope>
    <scope>SUBUNIT</scope>
</reference>
<gene>
    <name type="primary">athL</name>
</gene>
<evidence type="ECO:0000256" key="1">
    <source>
        <dbReference type="SAM" id="MobiDB-lite"/>
    </source>
</evidence>
<evidence type="ECO:0000269" key="2">
    <source>
    </source>
</evidence>
<evidence type="ECO:0000269" key="3">
    <source>
    </source>
</evidence>
<evidence type="ECO:0000305" key="4"/>
<evidence type="ECO:0007829" key="5">
    <source>
        <dbReference type="PDB" id="4V4C"/>
    </source>
</evidence>
<evidence type="ECO:0007829" key="6">
    <source>
        <dbReference type="PDB" id="4V4D"/>
    </source>
</evidence>
<evidence type="ECO:0007829" key="7">
    <source>
        <dbReference type="PDB" id="4V4E"/>
    </source>
</evidence>